<reference evidence="8" key="1">
    <citation type="journal article" date="2005" name="Glycobiology">
        <title>The animal sialyltransferases and sialyltransferase-related genes: a phylogenetic approach.</title>
        <authorList>
            <person name="Harduin-Lepers A."/>
            <person name="Mollicone R."/>
            <person name="Delannoy P."/>
            <person name="Oriol R."/>
        </authorList>
    </citation>
    <scope>NUCLEOTIDE SEQUENCE [MRNA]</scope>
    <source>
        <strain evidence="8">Sprague-Dawley</strain>
    </source>
</reference>
<reference key="2">
    <citation type="journal article" date="2004" name="Nature">
        <title>Genome sequence of the Brown Norway rat yields insights into mammalian evolution.</title>
        <authorList>
            <person name="Gibbs R.A."/>
            <person name="Weinstock G.M."/>
            <person name="Metzker M.L."/>
            <person name="Muzny D.M."/>
            <person name="Sodergren E.J."/>
            <person name="Scherer S."/>
            <person name="Scott G."/>
            <person name="Steffen D."/>
            <person name="Worley K.C."/>
            <person name="Burch P.E."/>
            <person name="Okwuonu G."/>
            <person name="Hines S."/>
            <person name="Lewis L."/>
            <person name="Deramo C."/>
            <person name="Delgado O."/>
            <person name="Dugan-Rocha S."/>
            <person name="Miner G."/>
            <person name="Morgan M."/>
            <person name="Hawes A."/>
            <person name="Gill R."/>
            <person name="Holt R.A."/>
            <person name="Adams M.D."/>
            <person name="Amanatides P.G."/>
            <person name="Baden-Tillson H."/>
            <person name="Barnstead M."/>
            <person name="Chin S."/>
            <person name="Evans C.A."/>
            <person name="Ferriera S."/>
            <person name="Fosler C."/>
            <person name="Glodek A."/>
            <person name="Gu Z."/>
            <person name="Jennings D."/>
            <person name="Kraft C.L."/>
            <person name="Nguyen T."/>
            <person name="Pfannkoch C.M."/>
            <person name="Sitter C."/>
            <person name="Sutton G.G."/>
            <person name="Venter J.C."/>
            <person name="Woodage T."/>
            <person name="Smith D."/>
            <person name="Lee H.-M."/>
            <person name="Gustafson E."/>
            <person name="Cahill P."/>
            <person name="Kana A."/>
            <person name="Doucette-Stamm L."/>
            <person name="Weinstock K."/>
            <person name="Fechtel K."/>
            <person name="Weiss R.B."/>
            <person name="Dunn D.M."/>
            <person name="Green E.D."/>
            <person name="Blakesley R.W."/>
            <person name="Bouffard G.G."/>
            <person name="De Jong P.J."/>
            <person name="Osoegawa K."/>
            <person name="Zhu B."/>
            <person name="Marra M."/>
            <person name="Schein J."/>
            <person name="Bosdet I."/>
            <person name="Fjell C."/>
            <person name="Jones S."/>
            <person name="Krzywinski M."/>
            <person name="Mathewson C."/>
            <person name="Siddiqui A."/>
            <person name="Wye N."/>
            <person name="McPherson J."/>
            <person name="Zhao S."/>
            <person name="Fraser C.M."/>
            <person name="Shetty J."/>
            <person name="Shatsman S."/>
            <person name="Geer K."/>
            <person name="Chen Y."/>
            <person name="Abramzon S."/>
            <person name="Nierman W.C."/>
            <person name="Havlak P.H."/>
            <person name="Chen R."/>
            <person name="Durbin K.J."/>
            <person name="Egan A."/>
            <person name="Ren Y."/>
            <person name="Song X.-Z."/>
            <person name="Li B."/>
            <person name="Liu Y."/>
            <person name="Qin X."/>
            <person name="Cawley S."/>
            <person name="Cooney A.J."/>
            <person name="D'Souza L.M."/>
            <person name="Martin K."/>
            <person name="Wu J.Q."/>
            <person name="Gonzalez-Garay M.L."/>
            <person name="Jackson A.R."/>
            <person name="Kalafus K.J."/>
            <person name="McLeod M.P."/>
            <person name="Milosavljevic A."/>
            <person name="Virk D."/>
            <person name="Volkov A."/>
            <person name="Wheeler D.A."/>
            <person name="Zhang Z."/>
            <person name="Bailey J.A."/>
            <person name="Eichler E.E."/>
            <person name="Tuzun E."/>
            <person name="Birney E."/>
            <person name="Mongin E."/>
            <person name="Ureta-Vidal A."/>
            <person name="Woodwark C."/>
            <person name="Zdobnov E."/>
            <person name="Bork P."/>
            <person name="Suyama M."/>
            <person name="Torrents D."/>
            <person name="Alexandersson M."/>
            <person name="Trask B.J."/>
            <person name="Young J.M."/>
            <person name="Huang H."/>
            <person name="Wang H."/>
            <person name="Xing H."/>
            <person name="Daniels S."/>
            <person name="Gietzen D."/>
            <person name="Schmidt J."/>
            <person name="Stevens K."/>
            <person name="Vitt U."/>
            <person name="Wingrove J."/>
            <person name="Camara F."/>
            <person name="Mar Alba M."/>
            <person name="Abril J.F."/>
            <person name="Guigo R."/>
            <person name="Smit A."/>
            <person name="Dubchak I."/>
            <person name="Rubin E.M."/>
            <person name="Couronne O."/>
            <person name="Poliakov A."/>
            <person name="Huebner N."/>
            <person name="Ganten D."/>
            <person name="Goesele C."/>
            <person name="Hummel O."/>
            <person name="Kreitler T."/>
            <person name="Lee Y.-A."/>
            <person name="Monti J."/>
            <person name="Schulz H."/>
            <person name="Zimdahl H."/>
            <person name="Himmelbauer H."/>
            <person name="Lehrach H."/>
            <person name="Jacob H.J."/>
            <person name="Bromberg S."/>
            <person name="Gullings-Handley J."/>
            <person name="Jensen-Seaman M.I."/>
            <person name="Kwitek A.E."/>
            <person name="Lazar J."/>
            <person name="Pasko D."/>
            <person name="Tonellato P.J."/>
            <person name="Twigger S."/>
            <person name="Ponting C.P."/>
            <person name="Duarte J.M."/>
            <person name="Rice S."/>
            <person name="Goodstadt L."/>
            <person name="Beatson S.A."/>
            <person name="Emes R.D."/>
            <person name="Winter E.E."/>
            <person name="Webber C."/>
            <person name="Brandt P."/>
            <person name="Nyakatura G."/>
            <person name="Adetobi M."/>
            <person name="Chiaromonte F."/>
            <person name="Elnitski L."/>
            <person name="Eswara P."/>
            <person name="Hardison R.C."/>
            <person name="Hou M."/>
            <person name="Kolbe D."/>
            <person name="Makova K."/>
            <person name="Miller W."/>
            <person name="Nekrutenko A."/>
            <person name="Riemer C."/>
            <person name="Schwartz S."/>
            <person name="Taylor J."/>
            <person name="Yang S."/>
            <person name="Zhang Y."/>
            <person name="Lindpaintner K."/>
            <person name="Andrews T.D."/>
            <person name="Caccamo M."/>
            <person name="Clamp M."/>
            <person name="Clarke L."/>
            <person name="Curwen V."/>
            <person name="Durbin R.M."/>
            <person name="Eyras E."/>
            <person name="Searle S.M."/>
            <person name="Cooper G.M."/>
            <person name="Batzoglou S."/>
            <person name="Brudno M."/>
            <person name="Sidow A."/>
            <person name="Stone E.A."/>
            <person name="Payseur B.A."/>
            <person name="Bourque G."/>
            <person name="Lopez-Otin C."/>
            <person name="Puente X.S."/>
            <person name="Chakrabarti K."/>
            <person name="Chatterji S."/>
            <person name="Dewey C."/>
            <person name="Pachter L."/>
            <person name="Bray N."/>
            <person name="Yap V.B."/>
            <person name="Caspi A."/>
            <person name="Tesler G."/>
            <person name="Pevzner P.A."/>
            <person name="Haussler D."/>
            <person name="Roskin K.M."/>
            <person name="Baertsch R."/>
            <person name="Clawson H."/>
            <person name="Furey T.S."/>
            <person name="Hinrichs A.S."/>
            <person name="Karolchik D."/>
            <person name="Kent W.J."/>
            <person name="Rosenbloom K.R."/>
            <person name="Trumbower H."/>
            <person name="Weirauch M."/>
            <person name="Cooper D.N."/>
            <person name="Stenson P.D."/>
            <person name="Ma B."/>
            <person name="Brent M."/>
            <person name="Arumugam M."/>
            <person name="Shteynberg D."/>
            <person name="Copley R.R."/>
            <person name="Taylor M.S."/>
            <person name="Riethman H."/>
            <person name="Mudunuri U."/>
            <person name="Peterson J."/>
            <person name="Guyer M."/>
            <person name="Felsenfeld A."/>
            <person name="Old S."/>
            <person name="Mockrin S."/>
            <person name="Collins F.S."/>
        </authorList>
    </citation>
    <scope>NUCLEOTIDE SEQUENCE [LARGE SCALE GENOMIC DNA]</scope>
    <source>
        <strain>Brown Norway</strain>
    </source>
</reference>
<reference key="3">
    <citation type="journal article" date="1992" name="Glycobiology">
        <title>The c-series gangliosides GT3, GT2 and GP1c are formed in rat liver Golgi by the same set of glycosyltransferases that catalyse the biosynthesis of asialo-, a- and b-series gangliosides.</title>
        <authorList>
            <person name="Iber H."/>
            <person name="Zacharias C."/>
            <person name="Sandhoff K."/>
        </authorList>
    </citation>
    <scope>FUNCTION</scope>
    <scope>CATALYTIC ACTIVITY</scope>
    <scope>SUBCELLULAR LOCATION</scope>
    <scope>TISSUE SPECIFICITY</scope>
</reference>
<gene>
    <name evidence="9" type="primary">St8sia5</name>
    <name evidence="8" type="synonym">Siat8e</name>
    <name type="synonym">St8siav</name>
</gene>
<evidence type="ECO:0000250" key="1">
    <source>
        <dbReference type="UniProtKB" id="O15466"/>
    </source>
</evidence>
<evidence type="ECO:0000250" key="2">
    <source>
        <dbReference type="UniProtKB" id="O43173"/>
    </source>
</evidence>
<evidence type="ECO:0000255" key="3"/>
<evidence type="ECO:0000255" key="4">
    <source>
        <dbReference type="PIRSR" id="PIRSR005557-2"/>
    </source>
</evidence>
<evidence type="ECO:0000269" key="5">
    <source>
    </source>
</evidence>
<evidence type="ECO:0000303" key="6">
    <source>
    </source>
</evidence>
<evidence type="ECO:0000305" key="7"/>
<evidence type="ECO:0000312" key="8">
    <source>
        <dbReference type="EMBL" id="CAG27884.1"/>
    </source>
</evidence>
<evidence type="ECO:0000312" key="9">
    <source>
        <dbReference type="RGD" id="1302934"/>
    </source>
</evidence>
<sequence length="376" mass="43840">MRYADPSANRDLLGNRTLLFIFICAFALVTLLQQILYSKSYIKRYFEFYKEPLEFNSTRCLELRQEILEVKVLSMVKQSELFERWKSLQICKWAMDASEASLFKSTLSRCCNAPNFLFTTQKNTPVETNLRYEVESSGLYHIDQEIFKMFPKEMPYYRSQFKKCAVVGNGGILKNSGCGKEINSADFVFRCNLPPISGIYTTDVGEKTDVVTVNPSIIIDRFHKLEKWRRPFFSVLQRYENASVLLPAFYNVRNTLVSFRVKYMLDDFQSRQPVYFFHPQYLSSVSRYWLSLGVRARRISTGLILVTAALELCEEVHLFGFWAFPMNPSGFFITHHYYDNVKPKPGFHAMPSEIFTFLRMHSRGILRVHTGTCNCC</sequence>
<keyword id="KW-0024">Alternative initiation</keyword>
<keyword id="KW-1015">Disulfide bond</keyword>
<keyword id="KW-0325">Glycoprotein</keyword>
<keyword id="KW-0328">Glycosyltransferase</keyword>
<keyword id="KW-0333">Golgi apparatus</keyword>
<keyword id="KW-0443">Lipid metabolism</keyword>
<keyword id="KW-0472">Membrane</keyword>
<keyword id="KW-1185">Reference proteome</keyword>
<keyword id="KW-0735">Signal-anchor</keyword>
<keyword id="KW-0808">Transferase</keyword>
<keyword id="KW-0812">Transmembrane</keyword>
<keyword id="KW-1133">Transmembrane helix</keyword>
<comment type="function">
    <text evidence="5">Involved in the synthesis of gangliosides GD1c, GT1a, GQ1b, GP1c and GT3 from GD1a, GT1b, GM1b and GD3 respectively.</text>
</comment>
<comment type="catalytic activity">
    <reaction evidence="5">
        <text>a ganglioside GT1b (d18:1(4E)) + CMP-N-acetyl-beta-neuraminate = a ganglioside GQ1b (d18:1(4E)) + CMP + H(+)</text>
        <dbReference type="Rhea" id="RHEA:41772"/>
        <dbReference type="ChEBI" id="CHEBI:15378"/>
        <dbReference type="ChEBI" id="CHEBI:57812"/>
        <dbReference type="ChEBI" id="CHEBI:60377"/>
        <dbReference type="ChEBI" id="CHEBI:78452"/>
        <dbReference type="ChEBI" id="CHEBI:78455"/>
    </reaction>
    <physiologicalReaction direction="left-to-right" evidence="5">
        <dbReference type="Rhea" id="RHEA:41773"/>
    </physiologicalReaction>
</comment>
<comment type="catalytic activity">
    <reaction evidence="5">
        <text>a ganglioside GQ1c (d18:1(4E)) + CMP-N-acetyl-beta-neuraminate = a ganglioside GP1c (d18:1(4E)) + CMP + H(+)</text>
        <dbReference type="Rhea" id="RHEA:47592"/>
        <dbReference type="ChEBI" id="CHEBI:15378"/>
        <dbReference type="ChEBI" id="CHEBI:57812"/>
        <dbReference type="ChEBI" id="CHEBI:60377"/>
        <dbReference type="ChEBI" id="CHEBI:87791"/>
        <dbReference type="ChEBI" id="CHEBI:87792"/>
    </reaction>
    <physiologicalReaction direction="left-to-right" evidence="5">
        <dbReference type="Rhea" id="RHEA:47593"/>
    </physiologicalReaction>
</comment>
<comment type="catalytic activity">
    <reaction evidence="5">
        <text>a ganglioside GD3 (d18:1(4E)) + CMP-N-acetyl-beta-neuraminate = a ganglioside GT3 (d18:1(4E)) + CMP + H(+)</text>
        <dbReference type="Rhea" id="RHEA:41764"/>
        <dbReference type="ChEBI" id="CHEBI:15378"/>
        <dbReference type="ChEBI" id="CHEBI:57812"/>
        <dbReference type="ChEBI" id="CHEBI:60377"/>
        <dbReference type="ChEBI" id="CHEBI:78436"/>
        <dbReference type="ChEBI" id="CHEBI:78438"/>
    </reaction>
    <physiologicalReaction direction="left-to-right" evidence="5">
        <dbReference type="Rhea" id="RHEA:41765"/>
    </physiologicalReaction>
</comment>
<comment type="catalytic activity">
    <reaction evidence="1">
        <text>a ganglioside GD1a (d18:1(4E)) + CMP-N-acetyl-beta-neuraminate = a ganglioside GT1a (d18:1(4E)) + CMP + H(+)</text>
        <dbReference type="Rhea" id="RHEA:41768"/>
        <dbReference type="ChEBI" id="CHEBI:15378"/>
        <dbReference type="ChEBI" id="CHEBI:57812"/>
        <dbReference type="ChEBI" id="CHEBI:60377"/>
        <dbReference type="ChEBI" id="CHEBI:78445"/>
        <dbReference type="ChEBI" id="CHEBI:78447"/>
    </reaction>
    <physiologicalReaction direction="left-to-right" evidence="1">
        <dbReference type="Rhea" id="RHEA:41769"/>
    </physiologicalReaction>
</comment>
<comment type="catalytic activity">
    <reaction evidence="1">
        <text>a ganglioside GM1b (d18:1(4E)) + CMP-N-acetyl-beta-neuraminate = a ganglioside GD1c (d18:1(4E)) + CMP + H(+)</text>
        <dbReference type="Rhea" id="RHEA:47576"/>
        <dbReference type="ChEBI" id="CHEBI:15378"/>
        <dbReference type="ChEBI" id="CHEBI:57812"/>
        <dbReference type="ChEBI" id="CHEBI:60377"/>
        <dbReference type="ChEBI" id="CHEBI:78568"/>
        <dbReference type="ChEBI" id="CHEBI:87787"/>
    </reaction>
    <physiologicalReaction direction="left-to-right" evidence="1">
        <dbReference type="Rhea" id="RHEA:47577"/>
    </physiologicalReaction>
</comment>
<comment type="biophysicochemical properties">
    <kinetics>
        <KM evidence="5">120 uM for GD3</KM>
        <KM evidence="5">130 uM for GD1a</KM>
        <Vmax evidence="5">1.7 nmol/h/mg enzyme towards GD3</Vmax>
        <Vmax evidence="5">0.7 nmol/h/mg enzyme towards GD1a</Vmax>
    </kinetics>
</comment>
<comment type="pathway">
    <text evidence="5">Protein modification; protein glycosylation.</text>
</comment>
<comment type="subcellular location">
    <subcellularLocation>
        <location evidence="5">Golgi apparatus membrane</location>
        <topology evidence="3">Single-pass type II membrane protein</topology>
    </subcellularLocation>
</comment>
<comment type="alternative products">
    <event type="alternative initiation"/>
    <isoform>
        <id>Q6ZXC8-1</id>
        <name>1</name>
        <sequence type="displayed"/>
    </isoform>
    <isoform>
        <id>Q6ZXC8-2</id>
        <name>2</name>
        <sequence type="described" ref="VSP_060566"/>
    </isoform>
</comment>
<comment type="tissue specificity">
    <text evidence="5">Expressed in liver.</text>
</comment>
<comment type="similarity">
    <text evidence="3">Belongs to the glycosyltransferase 29 family.</text>
</comment>
<feature type="chain" id="PRO_0000449514" description="Alpha-2,8-sialyltransferase 8E">
    <location>
        <begin position="1"/>
        <end position="376"/>
    </location>
</feature>
<feature type="transmembrane region" description="Helical" evidence="3">
    <location>
        <begin position="17"/>
        <end position="37"/>
    </location>
</feature>
<feature type="active site" description="Proton donor/acceptor" evidence="2">
    <location>
        <position position="348"/>
    </location>
</feature>
<feature type="binding site" evidence="2">
    <location>
        <position position="192"/>
    </location>
    <ligand>
        <name>substrate</name>
    </ligand>
</feature>
<feature type="binding site" evidence="2">
    <location>
        <begin position="214"/>
        <end position="216"/>
    </location>
    <ligand>
        <name>substrate</name>
    </ligand>
</feature>
<feature type="binding site" evidence="2">
    <location>
        <begin position="300"/>
        <end position="302"/>
    </location>
    <ligand>
        <name>substrate</name>
    </ligand>
</feature>
<feature type="glycosylation site" description="N-linked (GlcNAc...) asparagine" evidence="3">
    <location>
        <position position="56"/>
    </location>
</feature>
<feature type="glycosylation site" description="N-linked (GlcNAc...) asparagine" evidence="3">
    <location>
        <position position="241"/>
    </location>
</feature>
<feature type="disulfide bond" evidence="4">
    <location>
        <begin position="164"/>
        <end position="313"/>
    </location>
</feature>
<feature type="disulfide bond" evidence="2">
    <location>
        <begin position="178"/>
        <end position="373"/>
    </location>
</feature>
<feature type="splice variant" id="VSP_060566" description="In isoform 2.">
    <original>K</original>
    <variation>KRGFQFGWQRGDQQANWTGLFNASGSLTEQNISDSSS</variation>
    <location>
        <position position="43"/>
    </location>
</feature>
<feature type="sequence conflict" description="In Ref. 1; CAG27884." evidence="7" ref="1">
    <original>RQ</original>
    <variation>GE</variation>
    <location>
        <begin position="271"/>
        <end position="272"/>
    </location>
</feature>
<feature type="sequence conflict" description="In Ref. 1; CAG27884." evidence="7" ref="1">
    <original>Q</original>
    <variation>H</variation>
    <location>
        <position position="280"/>
    </location>
</feature>
<organism evidence="8">
    <name type="scientific">Rattus norvegicus</name>
    <name type="common">Rat</name>
    <dbReference type="NCBI Taxonomy" id="10116"/>
    <lineage>
        <taxon>Eukaryota</taxon>
        <taxon>Metazoa</taxon>
        <taxon>Chordata</taxon>
        <taxon>Craniata</taxon>
        <taxon>Vertebrata</taxon>
        <taxon>Euteleostomi</taxon>
        <taxon>Mammalia</taxon>
        <taxon>Eutheria</taxon>
        <taxon>Euarchontoglires</taxon>
        <taxon>Glires</taxon>
        <taxon>Rodentia</taxon>
        <taxon>Myomorpha</taxon>
        <taxon>Muroidea</taxon>
        <taxon>Muridae</taxon>
        <taxon>Murinae</taxon>
        <taxon>Rattus</taxon>
    </lineage>
</organism>
<name>SIA8E_RAT</name>
<accession>Q6ZXC8</accession>
<accession>A0A0G2JV41</accession>
<accession>E9PU47</accession>
<proteinExistence type="evidence at protein level"/>
<dbReference type="EC" id="2.4.99.-" evidence="5"/>
<dbReference type="EMBL" id="AJ699422">
    <property type="protein sequence ID" value="CAG27884.1"/>
    <property type="molecule type" value="mRNA"/>
</dbReference>
<dbReference type="EMBL" id="AC139391">
    <property type="status" value="NOT_ANNOTATED_CDS"/>
    <property type="molecule type" value="Genomic_DNA"/>
</dbReference>
<dbReference type="RefSeq" id="NP_001400037.1">
    <molecule id="Q6ZXC8-2"/>
    <property type="nucleotide sequence ID" value="NM_001413108.1"/>
</dbReference>
<dbReference type="RefSeq" id="NP_998793.2">
    <molecule id="Q6ZXC8-1"/>
    <property type="nucleotide sequence ID" value="NM_213628.2"/>
</dbReference>
<dbReference type="RefSeq" id="XP_006255030.1">
    <property type="nucleotide sequence ID" value="XM_006254968.3"/>
</dbReference>
<dbReference type="SMR" id="Q6ZXC8"/>
<dbReference type="FunCoup" id="Q6ZXC8">
    <property type="interactions" value="218"/>
</dbReference>
<dbReference type="STRING" id="10116.ENSRNOP00000069340"/>
<dbReference type="SwissLipids" id="SLP:000001441"/>
<dbReference type="CAZy" id="GT29">
    <property type="family name" value="Glycosyltransferase Family 29"/>
</dbReference>
<dbReference type="GlyCosmos" id="Q6ZXC8">
    <property type="glycosylation" value="2 sites, No reported glycans"/>
</dbReference>
<dbReference type="GlyGen" id="Q6ZXC8">
    <property type="glycosylation" value="2 sites"/>
</dbReference>
<dbReference type="PhosphoSitePlus" id="Q6ZXC8"/>
<dbReference type="PaxDb" id="10116-ENSRNOP00000033363"/>
<dbReference type="Ensembl" id="ENSRNOT00000035317.2">
    <molecule id="Q6ZXC8-1"/>
    <property type="protein sequence ID" value="ENSRNOP00000033363.1"/>
    <property type="gene ID" value="ENSRNOG00000022691.5"/>
</dbReference>
<dbReference type="Ensembl" id="ENSRNOT00000077679.2">
    <molecule id="Q6ZXC8-2"/>
    <property type="protein sequence ID" value="ENSRNOP00000069340.1"/>
    <property type="gene ID" value="ENSRNOG00000022691.5"/>
</dbReference>
<dbReference type="GeneID" id="364901"/>
<dbReference type="KEGG" id="rno:364901"/>
<dbReference type="AGR" id="RGD:1302934"/>
<dbReference type="CTD" id="29906"/>
<dbReference type="RGD" id="1302934">
    <property type="gene designation" value="St8sia5"/>
</dbReference>
<dbReference type="eggNOG" id="KOG2692">
    <property type="taxonomic scope" value="Eukaryota"/>
</dbReference>
<dbReference type="GeneTree" id="ENSGT01030000234535"/>
<dbReference type="HOGENOM" id="CLU_048583_1_1_1"/>
<dbReference type="InParanoid" id="Q6ZXC8"/>
<dbReference type="OMA" id="MFICAFG"/>
<dbReference type="PhylomeDB" id="Q6ZXC8"/>
<dbReference type="Reactome" id="R-RNO-4085001">
    <property type="pathway name" value="Sialic acid metabolism"/>
</dbReference>
<dbReference type="Reactome" id="R-RNO-9840309">
    <property type="pathway name" value="Glycosphingolipid biosynthesis"/>
</dbReference>
<dbReference type="UniPathway" id="UPA00378"/>
<dbReference type="PRO" id="PR:Q6ZXC8"/>
<dbReference type="Proteomes" id="UP000002494">
    <property type="component" value="Chromosome 18"/>
</dbReference>
<dbReference type="Bgee" id="ENSRNOG00000022691">
    <property type="expression patterns" value="Expressed in frontal cortex and 6 other cell types or tissues"/>
</dbReference>
<dbReference type="GO" id="GO:0000139">
    <property type="term" value="C:Golgi membrane"/>
    <property type="evidence" value="ECO:0000314"/>
    <property type="project" value="UniProtKB"/>
</dbReference>
<dbReference type="GO" id="GO:0003828">
    <property type="term" value="F:alpha-N-acetylneuraminate alpha-2,8-sialyltransferase activity"/>
    <property type="evidence" value="ECO:0000266"/>
    <property type="project" value="RGD"/>
</dbReference>
<dbReference type="GO" id="GO:0008373">
    <property type="term" value="F:sialyltransferase activity"/>
    <property type="evidence" value="ECO:0000314"/>
    <property type="project" value="UniProtKB"/>
</dbReference>
<dbReference type="GO" id="GO:0006688">
    <property type="term" value="P:glycosphingolipid biosynthetic process"/>
    <property type="evidence" value="ECO:0000314"/>
    <property type="project" value="UniProtKB"/>
</dbReference>
<dbReference type="GO" id="GO:0006491">
    <property type="term" value="P:N-glycan processing"/>
    <property type="evidence" value="ECO:0000318"/>
    <property type="project" value="GO_Central"/>
</dbReference>
<dbReference type="GO" id="GO:0009311">
    <property type="term" value="P:oligosaccharide metabolic process"/>
    <property type="evidence" value="ECO:0000318"/>
    <property type="project" value="GO_Central"/>
</dbReference>
<dbReference type="GO" id="GO:0006486">
    <property type="term" value="P:protein glycosylation"/>
    <property type="evidence" value="ECO:0000318"/>
    <property type="project" value="GO_Central"/>
</dbReference>
<dbReference type="FunFam" id="3.90.1480.20:FF:000004">
    <property type="entry name" value="alpha-2,8-sialyltransferase 8E isoform X1"/>
    <property type="match status" value="1"/>
</dbReference>
<dbReference type="Gene3D" id="3.90.1480.20">
    <property type="entry name" value="Glycosyl transferase family 29"/>
    <property type="match status" value="1"/>
</dbReference>
<dbReference type="InterPro" id="IPR001675">
    <property type="entry name" value="Glyco_trans_29"/>
</dbReference>
<dbReference type="InterPro" id="IPR050943">
    <property type="entry name" value="Glycosyltr_29_Sialyltrsf"/>
</dbReference>
<dbReference type="InterPro" id="IPR038578">
    <property type="entry name" value="GT29-like_sf"/>
</dbReference>
<dbReference type="InterPro" id="IPR012163">
    <property type="entry name" value="Sialyl_trans"/>
</dbReference>
<dbReference type="PANTHER" id="PTHR11987">
    <property type="entry name" value="ALPHA-2,8-SIALYLTRANSFERASE"/>
    <property type="match status" value="1"/>
</dbReference>
<dbReference type="PANTHER" id="PTHR11987:SF4">
    <property type="entry name" value="ALPHA-2,8-SIALYLTRANSFERASE 8E"/>
    <property type="match status" value="1"/>
</dbReference>
<dbReference type="Pfam" id="PF00777">
    <property type="entry name" value="Glyco_transf_29"/>
    <property type="match status" value="1"/>
</dbReference>
<dbReference type="PIRSF" id="PIRSF005557">
    <property type="entry name" value="Sialyl_trans"/>
    <property type="match status" value="1"/>
</dbReference>
<protein>
    <recommendedName>
        <fullName evidence="7">Alpha-2,8-sialyltransferase 8E</fullName>
        <ecNumber evidence="5">2.4.99.-</ecNumber>
    </recommendedName>
    <alternativeName>
        <fullName>Sialyltransferase 8E</fullName>
        <shortName>SIAT8-E</shortName>
    </alternativeName>
    <alternativeName>
        <fullName>Sialyltransferase St8Sia V</fullName>
        <shortName evidence="6">SATV</shortName>
        <shortName>ST8SiaV</shortName>
    </alternativeName>
</protein>